<proteinExistence type="inferred from homology"/>
<sequence>MKTIGVLAFQGGVIEHVKKIEELGAKPQLVKKKEDLKDLDGLILPGGESTTIGKFLIETGLKDQILNLIYEGMPVWGTCAGAILLSKNIKNQGSGVLPVLNIVIERNAYGSQLDSFKKEVFVPRFNIATECIFIRAPRIVEVAEGVEVLAELETPIAVLQKNILATTFHPELTSQNYWHSFFVENMVK</sequence>
<reference key="1">
    <citation type="submission" date="2009-01" db="EMBL/GenBank/DDBJ databases">
        <title>Complete sequence of chromosome of Caldicellulosiruptor becscii DSM 6725.</title>
        <authorList>
            <person name="Lucas S."/>
            <person name="Copeland A."/>
            <person name="Lapidus A."/>
            <person name="Glavina del Rio T."/>
            <person name="Tice H."/>
            <person name="Bruce D."/>
            <person name="Goodwin L."/>
            <person name="Pitluck S."/>
            <person name="Sims D."/>
            <person name="Meincke L."/>
            <person name="Brettin T."/>
            <person name="Detter J.C."/>
            <person name="Han C."/>
            <person name="Larimer F."/>
            <person name="Land M."/>
            <person name="Hauser L."/>
            <person name="Kyrpides N."/>
            <person name="Ovchinnikova G."/>
            <person name="Kataeva I."/>
            <person name="Adams M.W.W."/>
        </authorList>
    </citation>
    <scope>NUCLEOTIDE SEQUENCE [LARGE SCALE GENOMIC DNA]</scope>
    <source>
        <strain>ATCC BAA-1888 / DSM 6725 / KCTC 15123 / Z-1320</strain>
    </source>
</reference>
<name>PDXT_CALBD</name>
<dbReference type="EC" id="4.3.3.6" evidence="1"/>
<dbReference type="EC" id="3.5.1.2" evidence="1"/>
<dbReference type="EMBL" id="CP001393">
    <property type="protein sequence ID" value="ACM60996.1"/>
    <property type="molecule type" value="Genomic_DNA"/>
</dbReference>
<dbReference type="RefSeq" id="WP_015908290.1">
    <property type="nucleotide sequence ID" value="NC_012034.1"/>
</dbReference>
<dbReference type="SMR" id="B9MKY8"/>
<dbReference type="STRING" id="521460.Athe_1908"/>
<dbReference type="MEROPS" id="C26.A32"/>
<dbReference type="GeneID" id="31773257"/>
<dbReference type="KEGG" id="ate:Athe_1908"/>
<dbReference type="eggNOG" id="COG0311">
    <property type="taxonomic scope" value="Bacteria"/>
</dbReference>
<dbReference type="HOGENOM" id="CLU_069674_2_0_9"/>
<dbReference type="UniPathway" id="UPA00245"/>
<dbReference type="Proteomes" id="UP000007723">
    <property type="component" value="Chromosome"/>
</dbReference>
<dbReference type="GO" id="GO:0005829">
    <property type="term" value="C:cytosol"/>
    <property type="evidence" value="ECO:0007669"/>
    <property type="project" value="TreeGrafter"/>
</dbReference>
<dbReference type="GO" id="GO:1903600">
    <property type="term" value="C:glutaminase complex"/>
    <property type="evidence" value="ECO:0007669"/>
    <property type="project" value="TreeGrafter"/>
</dbReference>
<dbReference type="GO" id="GO:0004359">
    <property type="term" value="F:glutaminase activity"/>
    <property type="evidence" value="ECO:0007669"/>
    <property type="project" value="UniProtKB-UniRule"/>
</dbReference>
<dbReference type="GO" id="GO:0036381">
    <property type="term" value="F:pyridoxal 5'-phosphate synthase (glutamine hydrolysing) activity"/>
    <property type="evidence" value="ECO:0007669"/>
    <property type="project" value="UniProtKB-UniRule"/>
</dbReference>
<dbReference type="GO" id="GO:0006543">
    <property type="term" value="P:glutamine catabolic process"/>
    <property type="evidence" value="ECO:0007669"/>
    <property type="project" value="UniProtKB-UniRule"/>
</dbReference>
<dbReference type="GO" id="GO:0042823">
    <property type="term" value="P:pyridoxal phosphate biosynthetic process"/>
    <property type="evidence" value="ECO:0007669"/>
    <property type="project" value="UniProtKB-UniRule"/>
</dbReference>
<dbReference type="GO" id="GO:0008614">
    <property type="term" value="P:pyridoxine metabolic process"/>
    <property type="evidence" value="ECO:0007669"/>
    <property type="project" value="TreeGrafter"/>
</dbReference>
<dbReference type="CDD" id="cd01749">
    <property type="entry name" value="GATase1_PB"/>
    <property type="match status" value="1"/>
</dbReference>
<dbReference type="FunFam" id="3.40.50.880:FF:000010">
    <property type="entry name" value="uncharacterized protein LOC100176842 isoform X2"/>
    <property type="match status" value="1"/>
</dbReference>
<dbReference type="Gene3D" id="3.40.50.880">
    <property type="match status" value="1"/>
</dbReference>
<dbReference type="HAMAP" id="MF_01615">
    <property type="entry name" value="PdxT"/>
    <property type="match status" value="1"/>
</dbReference>
<dbReference type="InterPro" id="IPR029062">
    <property type="entry name" value="Class_I_gatase-like"/>
</dbReference>
<dbReference type="InterPro" id="IPR002161">
    <property type="entry name" value="PdxT/SNO"/>
</dbReference>
<dbReference type="InterPro" id="IPR021196">
    <property type="entry name" value="PdxT/SNO_CS"/>
</dbReference>
<dbReference type="NCBIfam" id="TIGR03800">
    <property type="entry name" value="PLP_synth_Pdx2"/>
    <property type="match status" value="1"/>
</dbReference>
<dbReference type="PANTHER" id="PTHR31559">
    <property type="entry name" value="PYRIDOXAL 5'-PHOSPHATE SYNTHASE SUBUNIT SNO"/>
    <property type="match status" value="1"/>
</dbReference>
<dbReference type="PANTHER" id="PTHR31559:SF0">
    <property type="entry name" value="PYRIDOXAL 5'-PHOSPHATE SYNTHASE SUBUNIT SNO1-RELATED"/>
    <property type="match status" value="1"/>
</dbReference>
<dbReference type="Pfam" id="PF01174">
    <property type="entry name" value="SNO"/>
    <property type="match status" value="1"/>
</dbReference>
<dbReference type="PIRSF" id="PIRSF005639">
    <property type="entry name" value="Glut_amidoT_SNO"/>
    <property type="match status" value="1"/>
</dbReference>
<dbReference type="SUPFAM" id="SSF52317">
    <property type="entry name" value="Class I glutamine amidotransferase-like"/>
    <property type="match status" value="1"/>
</dbReference>
<dbReference type="PROSITE" id="PS01236">
    <property type="entry name" value="PDXT_SNO_1"/>
    <property type="match status" value="1"/>
</dbReference>
<dbReference type="PROSITE" id="PS51130">
    <property type="entry name" value="PDXT_SNO_2"/>
    <property type="match status" value="1"/>
</dbReference>
<keyword id="KW-0315">Glutamine amidotransferase</keyword>
<keyword id="KW-0378">Hydrolase</keyword>
<keyword id="KW-0456">Lyase</keyword>
<keyword id="KW-0663">Pyridoxal phosphate</keyword>
<comment type="function">
    <text evidence="1">Catalyzes the hydrolysis of glutamine to glutamate and ammonia as part of the biosynthesis of pyridoxal 5'-phosphate. The resulting ammonia molecule is channeled to the active site of PdxS.</text>
</comment>
<comment type="catalytic activity">
    <reaction evidence="1">
        <text>aldehydo-D-ribose 5-phosphate + D-glyceraldehyde 3-phosphate + L-glutamine = pyridoxal 5'-phosphate + L-glutamate + phosphate + 3 H2O + H(+)</text>
        <dbReference type="Rhea" id="RHEA:31507"/>
        <dbReference type="ChEBI" id="CHEBI:15377"/>
        <dbReference type="ChEBI" id="CHEBI:15378"/>
        <dbReference type="ChEBI" id="CHEBI:29985"/>
        <dbReference type="ChEBI" id="CHEBI:43474"/>
        <dbReference type="ChEBI" id="CHEBI:58273"/>
        <dbReference type="ChEBI" id="CHEBI:58359"/>
        <dbReference type="ChEBI" id="CHEBI:59776"/>
        <dbReference type="ChEBI" id="CHEBI:597326"/>
        <dbReference type="EC" id="4.3.3.6"/>
    </reaction>
</comment>
<comment type="catalytic activity">
    <reaction evidence="1">
        <text>L-glutamine + H2O = L-glutamate + NH4(+)</text>
        <dbReference type="Rhea" id="RHEA:15889"/>
        <dbReference type="ChEBI" id="CHEBI:15377"/>
        <dbReference type="ChEBI" id="CHEBI:28938"/>
        <dbReference type="ChEBI" id="CHEBI:29985"/>
        <dbReference type="ChEBI" id="CHEBI:58359"/>
        <dbReference type="EC" id="3.5.1.2"/>
    </reaction>
</comment>
<comment type="pathway">
    <text evidence="1">Cofactor biosynthesis; pyridoxal 5'-phosphate biosynthesis.</text>
</comment>
<comment type="subunit">
    <text evidence="1">In the presence of PdxS, forms a dodecamer of heterodimers. Only shows activity in the heterodimer.</text>
</comment>
<comment type="similarity">
    <text evidence="1">Belongs to the glutaminase PdxT/SNO family.</text>
</comment>
<evidence type="ECO:0000255" key="1">
    <source>
        <dbReference type="HAMAP-Rule" id="MF_01615"/>
    </source>
</evidence>
<gene>
    <name evidence="1" type="primary">pdxT</name>
    <name type="ordered locus">Athe_1908</name>
</gene>
<accession>B9MKY8</accession>
<organism>
    <name type="scientific">Caldicellulosiruptor bescii (strain ATCC BAA-1888 / DSM 6725 / KCTC 15123 / Z-1320)</name>
    <name type="common">Anaerocellum thermophilum</name>
    <dbReference type="NCBI Taxonomy" id="521460"/>
    <lineage>
        <taxon>Bacteria</taxon>
        <taxon>Bacillati</taxon>
        <taxon>Bacillota</taxon>
        <taxon>Bacillota incertae sedis</taxon>
        <taxon>Caldicellulosiruptorales</taxon>
        <taxon>Caldicellulosiruptoraceae</taxon>
        <taxon>Caldicellulosiruptor</taxon>
    </lineage>
</organism>
<feature type="chain" id="PRO_1000185867" description="Pyridoxal 5'-phosphate synthase subunit PdxT">
    <location>
        <begin position="1"/>
        <end position="188"/>
    </location>
</feature>
<feature type="active site" description="Nucleophile" evidence="1">
    <location>
        <position position="79"/>
    </location>
</feature>
<feature type="active site" description="Charge relay system" evidence="1">
    <location>
        <position position="169"/>
    </location>
</feature>
<feature type="active site" description="Charge relay system" evidence="1">
    <location>
        <position position="171"/>
    </location>
</feature>
<feature type="binding site" evidence="1">
    <location>
        <begin position="47"/>
        <end position="49"/>
    </location>
    <ligand>
        <name>L-glutamine</name>
        <dbReference type="ChEBI" id="CHEBI:58359"/>
    </ligand>
</feature>
<feature type="binding site" evidence="1">
    <location>
        <position position="106"/>
    </location>
    <ligand>
        <name>L-glutamine</name>
        <dbReference type="ChEBI" id="CHEBI:58359"/>
    </ligand>
</feature>
<feature type="binding site" evidence="1">
    <location>
        <begin position="134"/>
        <end position="135"/>
    </location>
    <ligand>
        <name>L-glutamine</name>
        <dbReference type="ChEBI" id="CHEBI:58359"/>
    </ligand>
</feature>
<protein>
    <recommendedName>
        <fullName evidence="1">Pyridoxal 5'-phosphate synthase subunit PdxT</fullName>
        <ecNumber evidence="1">4.3.3.6</ecNumber>
    </recommendedName>
    <alternativeName>
        <fullName evidence="1">Pdx2</fullName>
    </alternativeName>
    <alternativeName>
        <fullName evidence="1">Pyridoxal 5'-phosphate synthase glutaminase subunit</fullName>
        <ecNumber evidence="1">3.5.1.2</ecNumber>
    </alternativeName>
</protein>